<dbReference type="EC" id="1.2.7.8"/>
<dbReference type="EMBL" id="AE000666">
    <property type="protein sequence ID" value="AAB86319.1"/>
    <property type="molecule type" value="Genomic_DNA"/>
</dbReference>
<dbReference type="PIR" id="H69114">
    <property type="entry name" value="H69114"/>
</dbReference>
<dbReference type="RefSeq" id="WP_010877455.1">
    <property type="nucleotide sequence ID" value="NC_000916.1"/>
</dbReference>
<dbReference type="SMR" id="O27881"/>
<dbReference type="STRING" id="187420.MTH_1853"/>
<dbReference type="PaxDb" id="187420-MTH_1853"/>
<dbReference type="EnsemblBacteria" id="AAB86319">
    <property type="protein sequence ID" value="AAB86319"/>
    <property type="gene ID" value="MTH_1853"/>
</dbReference>
<dbReference type="GeneID" id="1470938"/>
<dbReference type="GeneID" id="77402365"/>
<dbReference type="KEGG" id="mth:MTH_1853"/>
<dbReference type="PATRIC" id="fig|187420.15.peg.1806"/>
<dbReference type="HOGENOM" id="CLU_087284_1_1_2"/>
<dbReference type="InParanoid" id="O27881"/>
<dbReference type="Proteomes" id="UP000005223">
    <property type="component" value="Chromosome"/>
</dbReference>
<dbReference type="GO" id="GO:0043805">
    <property type="term" value="F:indolepyruvate ferredoxin oxidoreductase activity"/>
    <property type="evidence" value="ECO:0007669"/>
    <property type="project" value="UniProtKB-EC"/>
</dbReference>
<dbReference type="Gene3D" id="3.40.920.10">
    <property type="entry name" value="Pyruvate-ferredoxin oxidoreductase, PFOR, domain III"/>
    <property type="match status" value="1"/>
</dbReference>
<dbReference type="InterPro" id="IPR017719">
    <property type="entry name" value="Indolepyruvate_Fd_OxRdtase_bsu"/>
</dbReference>
<dbReference type="InterPro" id="IPR052198">
    <property type="entry name" value="IorB_Oxidoreductase"/>
</dbReference>
<dbReference type="InterPro" id="IPR019752">
    <property type="entry name" value="Pyrv/ketoisovalerate_OxRed_cat"/>
</dbReference>
<dbReference type="InterPro" id="IPR002869">
    <property type="entry name" value="Pyrv_flavodox_OxRed_cen"/>
</dbReference>
<dbReference type="NCBIfam" id="TIGR03334">
    <property type="entry name" value="IOR_beta"/>
    <property type="match status" value="1"/>
</dbReference>
<dbReference type="NCBIfam" id="NF005323">
    <property type="entry name" value="PRK06853.1-3"/>
    <property type="match status" value="1"/>
</dbReference>
<dbReference type="PANTHER" id="PTHR43854">
    <property type="entry name" value="INDOLEPYRUVATE OXIDOREDUCTASE SUBUNIT IORB"/>
    <property type="match status" value="1"/>
</dbReference>
<dbReference type="PANTHER" id="PTHR43854:SF1">
    <property type="entry name" value="INDOLEPYRUVATE OXIDOREDUCTASE SUBUNIT IORB"/>
    <property type="match status" value="1"/>
</dbReference>
<dbReference type="Pfam" id="PF01558">
    <property type="entry name" value="POR"/>
    <property type="match status" value="1"/>
</dbReference>
<dbReference type="SUPFAM" id="SSF53323">
    <property type="entry name" value="Pyruvate-ferredoxin oxidoreductase, PFOR, domain III"/>
    <property type="match status" value="1"/>
</dbReference>
<comment type="function">
    <text evidence="1">Catalyzes the ferredoxin-dependent oxidative decarboxylation of arylpyruvates.</text>
</comment>
<comment type="catalytic activity">
    <reaction>
        <text>indole-3-pyruvate + 2 oxidized [2Fe-2S]-[ferredoxin] + CoA = (indol-3-yl)acetyl-CoA + 2 reduced [2Fe-2S]-[ferredoxin] + CO2 + H(+)</text>
        <dbReference type="Rhea" id="RHEA:12645"/>
        <dbReference type="Rhea" id="RHEA-COMP:10000"/>
        <dbReference type="Rhea" id="RHEA-COMP:10001"/>
        <dbReference type="ChEBI" id="CHEBI:15378"/>
        <dbReference type="ChEBI" id="CHEBI:16526"/>
        <dbReference type="ChEBI" id="CHEBI:17640"/>
        <dbReference type="ChEBI" id="CHEBI:33737"/>
        <dbReference type="ChEBI" id="CHEBI:33738"/>
        <dbReference type="ChEBI" id="CHEBI:57271"/>
        <dbReference type="ChEBI" id="CHEBI:57287"/>
        <dbReference type="EC" id="1.2.7.8"/>
    </reaction>
</comment>
<comment type="subunit">
    <text>Heterodimer of the IorA and IorB subunits.</text>
</comment>
<protein>
    <recommendedName>
        <fullName>Indolepyruvate oxidoreductase subunit IorB</fullName>
        <shortName>IOR</shortName>
        <ecNumber>1.2.7.8</ecNumber>
    </recommendedName>
    <alternativeName>
        <fullName>Indolepyruvate ferredoxin oxidoreductase subunit beta</fullName>
    </alternativeName>
</protein>
<organism>
    <name type="scientific">Methanothermobacter thermautotrophicus (strain ATCC 29096 / DSM 1053 / JCM 10044 / NBRC 100330 / Delta H)</name>
    <name type="common">Methanobacterium thermoautotrophicum</name>
    <dbReference type="NCBI Taxonomy" id="187420"/>
    <lineage>
        <taxon>Archaea</taxon>
        <taxon>Methanobacteriati</taxon>
        <taxon>Methanobacteriota</taxon>
        <taxon>Methanomada group</taxon>
        <taxon>Methanobacteria</taxon>
        <taxon>Methanobacteriales</taxon>
        <taxon>Methanobacteriaceae</taxon>
        <taxon>Methanothermobacter</taxon>
    </lineage>
</organism>
<keyword id="KW-0560">Oxidoreductase</keyword>
<keyword id="KW-1185">Reference proteome</keyword>
<name>IORB_METTH</name>
<proteinExistence type="inferred from homology"/>
<evidence type="ECO:0000250" key="1"/>
<reference key="1">
    <citation type="journal article" date="1997" name="J. Bacteriol.">
        <title>Complete genome sequence of Methanobacterium thermoautotrophicum deltaH: functional analysis and comparative genomics.</title>
        <authorList>
            <person name="Smith D.R."/>
            <person name="Doucette-Stamm L.A."/>
            <person name="Deloughery C."/>
            <person name="Lee H.-M."/>
            <person name="Dubois J."/>
            <person name="Aldredge T."/>
            <person name="Bashirzadeh R."/>
            <person name="Blakely D."/>
            <person name="Cook R."/>
            <person name="Gilbert K."/>
            <person name="Harrison D."/>
            <person name="Hoang L."/>
            <person name="Keagle P."/>
            <person name="Lumm W."/>
            <person name="Pothier B."/>
            <person name="Qiu D."/>
            <person name="Spadafora R."/>
            <person name="Vicare R."/>
            <person name="Wang Y."/>
            <person name="Wierzbowski J."/>
            <person name="Gibson R."/>
            <person name="Jiwani N."/>
            <person name="Caruso A."/>
            <person name="Bush D."/>
            <person name="Safer H."/>
            <person name="Patwell D."/>
            <person name="Prabhakar S."/>
            <person name="McDougall S."/>
            <person name="Shimer G."/>
            <person name="Goyal A."/>
            <person name="Pietrovski S."/>
            <person name="Church G.M."/>
            <person name="Daniels C.J."/>
            <person name="Mao J.-I."/>
            <person name="Rice P."/>
            <person name="Noelling J."/>
            <person name="Reeve J.N."/>
        </authorList>
    </citation>
    <scope>NUCLEOTIDE SEQUENCE [LARGE SCALE GENOMIC DNA]</scope>
    <source>
        <strain>ATCC 29096 / DSM 1053 / JCM 10044 / NBRC 100330 / Delta H</strain>
    </source>
</reference>
<sequence length="196" mass="20948">MNYNIYVCGVGGQGIIKTSVIIGEAAMKKDINVVMSEIHGMAQRGGSVSTEIRIGEVHGSIIPDGEADLVLAFEPLEAIRALPKMSEESEVILNTSVIPPFNLMRSPHPYPPLDEIMSTLEERAGSVRGFNAEEIALKAGHILSLNMVMLGAAAATPGFPLESESLISSMRDNLPSRLIDVNLRAFRDGFGAAAES</sequence>
<feature type="chain" id="PRO_0000099932" description="Indolepyruvate oxidoreductase subunit IorB">
    <location>
        <begin position="1"/>
        <end position="196"/>
    </location>
</feature>
<accession>O27881</accession>
<gene>
    <name type="primary">iorB</name>
    <name type="ordered locus">MTH_1853</name>
</gene>